<dbReference type="EC" id="2.7.2.3" evidence="1"/>
<dbReference type="EMBL" id="CP001175">
    <property type="protein sequence ID" value="ACK38504.1"/>
    <property type="molecule type" value="Genomic_DNA"/>
</dbReference>
<dbReference type="RefSeq" id="WP_003726582.1">
    <property type="nucleotide sequence ID" value="NC_011660.1"/>
</dbReference>
<dbReference type="SMR" id="B8DD98"/>
<dbReference type="KEGG" id="lmh:LMHCC_0142"/>
<dbReference type="HOGENOM" id="CLU_025427_0_2_9"/>
<dbReference type="UniPathway" id="UPA00109">
    <property type="reaction ID" value="UER00185"/>
</dbReference>
<dbReference type="GO" id="GO:0005829">
    <property type="term" value="C:cytosol"/>
    <property type="evidence" value="ECO:0007669"/>
    <property type="project" value="TreeGrafter"/>
</dbReference>
<dbReference type="GO" id="GO:0043531">
    <property type="term" value="F:ADP binding"/>
    <property type="evidence" value="ECO:0007669"/>
    <property type="project" value="TreeGrafter"/>
</dbReference>
<dbReference type="GO" id="GO:0005524">
    <property type="term" value="F:ATP binding"/>
    <property type="evidence" value="ECO:0007669"/>
    <property type="project" value="UniProtKB-KW"/>
</dbReference>
<dbReference type="GO" id="GO:0004618">
    <property type="term" value="F:phosphoglycerate kinase activity"/>
    <property type="evidence" value="ECO:0007669"/>
    <property type="project" value="UniProtKB-UniRule"/>
</dbReference>
<dbReference type="GO" id="GO:0006094">
    <property type="term" value="P:gluconeogenesis"/>
    <property type="evidence" value="ECO:0007669"/>
    <property type="project" value="TreeGrafter"/>
</dbReference>
<dbReference type="GO" id="GO:0006096">
    <property type="term" value="P:glycolytic process"/>
    <property type="evidence" value="ECO:0007669"/>
    <property type="project" value="UniProtKB-UniRule"/>
</dbReference>
<dbReference type="CDD" id="cd00318">
    <property type="entry name" value="Phosphoglycerate_kinase"/>
    <property type="match status" value="1"/>
</dbReference>
<dbReference type="FunFam" id="3.40.50.1260:FF:000001">
    <property type="entry name" value="Phosphoglycerate kinase"/>
    <property type="match status" value="1"/>
</dbReference>
<dbReference type="FunFam" id="3.40.50.1260:FF:000008">
    <property type="entry name" value="Phosphoglycerate kinase"/>
    <property type="match status" value="1"/>
</dbReference>
<dbReference type="Gene3D" id="3.40.50.1260">
    <property type="entry name" value="Phosphoglycerate kinase, N-terminal domain"/>
    <property type="match status" value="2"/>
</dbReference>
<dbReference type="HAMAP" id="MF_00145">
    <property type="entry name" value="Phosphoglyc_kinase"/>
    <property type="match status" value="1"/>
</dbReference>
<dbReference type="InterPro" id="IPR001576">
    <property type="entry name" value="Phosphoglycerate_kinase"/>
</dbReference>
<dbReference type="InterPro" id="IPR015911">
    <property type="entry name" value="Phosphoglycerate_kinase_CS"/>
</dbReference>
<dbReference type="InterPro" id="IPR015824">
    <property type="entry name" value="Phosphoglycerate_kinase_N"/>
</dbReference>
<dbReference type="InterPro" id="IPR036043">
    <property type="entry name" value="Phosphoglycerate_kinase_sf"/>
</dbReference>
<dbReference type="PANTHER" id="PTHR11406">
    <property type="entry name" value="PHOSPHOGLYCERATE KINASE"/>
    <property type="match status" value="1"/>
</dbReference>
<dbReference type="PANTHER" id="PTHR11406:SF23">
    <property type="entry name" value="PHOSPHOGLYCERATE KINASE 1, CHLOROPLASTIC-RELATED"/>
    <property type="match status" value="1"/>
</dbReference>
<dbReference type="Pfam" id="PF00162">
    <property type="entry name" value="PGK"/>
    <property type="match status" value="1"/>
</dbReference>
<dbReference type="PIRSF" id="PIRSF000724">
    <property type="entry name" value="Pgk"/>
    <property type="match status" value="1"/>
</dbReference>
<dbReference type="PRINTS" id="PR00477">
    <property type="entry name" value="PHGLYCKINASE"/>
</dbReference>
<dbReference type="SUPFAM" id="SSF53748">
    <property type="entry name" value="Phosphoglycerate kinase"/>
    <property type="match status" value="1"/>
</dbReference>
<dbReference type="PROSITE" id="PS00111">
    <property type="entry name" value="PGLYCERATE_KINASE"/>
    <property type="match status" value="1"/>
</dbReference>
<sequence>MAKKVVTDLDLKDKKVLVRVDFNVPMKDGKITNDNRIVAALPTIEYILEQNGKAILFSHLGKVKTEEDKEGKSLRPVAARLSELLGKEVKFVPTTRGPELEKAIDELKDGEVLLFENTRFEDIDGKKESKNDPELGKYWASLGDVFVNDAFGTAHRAHASNVGIASNLESAAGFLMEKEIKFIGGVVDNPARPLVAILGGAKVSDKIGVIENLLTKADKVLVGGGMTFTFMAAQGQEIGKSLLEADKVELAKGLLEKAGDKLVLPVDAVVSKEFSNDAPFHTVSADSIPADEMGLDIGQATIDLFTKELQGAKTVVWNGPMGVFELSNFAKGTIGVCEAIANLTDATTIIGGGDSAAAAMDLGFADKFTHISTGGGASLEYLEGKELPGVASISDK</sequence>
<gene>
    <name evidence="1" type="primary">pgk</name>
    <name type="ordered locus">LMHCC_0142</name>
</gene>
<feature type="chain" id="PRO_1000192836" description="Phosphoglycerate kinase">
    <location>
        <begin position="1"/>
        <end position="396"/>
    </location>
</feature>
<feature type="binding site" evidence="1">
    <location>
        <begin position="21"/>
        <end position="23"/>
    </location>
    <ligand>
        <name>substrate</name>
    </ligand>
</feature>
<feature type="binding site" evidence="1">
    <location>
        <position position="36"/>
    </location>
    <ligand>
        <name>substrate</name>
    </ligand>
</feature>
<feature type="binding site" evidence="1">
    <location>
        <begin position="59"/>
        <end position="62"/>
    </location>
    <ligand>
        <name>substrate</name>
    </ligand>
</feature>
<feature type="binding site" evidence="1">
    <location>
        <position position="119"/>
    </location>
    <ligand>
        <name>substrate</name>
    </ligand>
</feature>
<feature type="binding site" evidence="1">
    <location>
        <position position="156"/>
    </location>
    <ligand>
        <name>substrate</name>
    </ligand>
</feature>
<feature type="binding site" evidence="1">
    <location>
        <position position="206"/>
    </location>
    <ligand>
        <name>ATP</name>
        <dbReference type="ChEBI" id="CHEBI:30616"/>
    </ligand>
</feature>
<feature type="binding site" evidence="1">
    <location>
        <position position="294"/>
    </location>
    <ligand>
        <name>ATP</name>
        <dbReference type="ChEBI" id="CHEBI:30616"/>
    </ligand>
</feature>
<feature type="binding site" evidence="1">
    <location>
        <position position="325"/>
    </location>
    <ligand>
        <name>ATP</name>
        <dbReference type="ChEBI" id="CHEBI:30616"/>
    </ligand>
</feature>
<feature type="binding site" evidence="1">
    <location>
        <begin position="352"/>
        <end position="355"/>
    </location>
    <ligand>
        <name>ATP</name>
        <dbReference type="ChEBI" id="CHEBI:30616"/>
    </ligand>
</feature>
<organism>
    <name type="scientific">Listeria monocytogenes serotype 4a (strain HCC23)</name>
    <dbReference type="NCBI Taxonomy" id="552536"/>
    <lineage>
        <taxon>Bacteria</taxon>
        <taxon>Bacillati</taxon>
        <taxon>Bacillota</taxon>
        <taxon>Bacilli</taxon>
        <taxon>Bacillales</taxon>
        <taxon>Listeriaceae</taxon>
        <taxon>Listeria</taxon>
    </lineage>
</organism>
<accession>B8DD98</accession>
<comment type="catalytic activity">
    <reaction evidence="1">
        <text>(2R)-3-phosphoglycerate + ATP = (2R)-3-phospho-glyceroyl phosphate + ADP</text>
        <dbReference type="Rhea" id="RHEA:14801"/>
        <dbReference type="ChEBI" id="CHEBI:30616"/>
        <dbReference type="ChEBI" id="CHEBI:57604"/>
        <dbReference type="ChEBI" id="CHEBI:58272"/>
        <dbReference type="ChEBI" id="CHEBI:456216"/>
        <dbReference type="EC" id="2.7.2.3"/>
    </reaction>
</comment>
<comment type="pathway">
    <text evidence="1">Carbohydrate degradation; glycolysis; pyruvate from D-glyceraldehyde 3-phosphate: step 2/5.</text>
</comment>
<comment type="subunit">
    <text evidence="1">Monomer.</text>
</comment>
<comment type="subcellular location">
    <subcellularLocation>
        <location evidence="1">Cytoplasm</location>
    </subcellularLocation>
</comment>
<comment type="similarity">
    <text evidence="1">Belongs to the phosphoglycerate kinase family.</text>
</comment>
<evidence type="ECO:0000255" key="1">
    <source>
        <dbReference type="HAMAP-Rule" id="MF_00145"/>
    </source>
</evidence>
<protein>
    <recommendedName>
        <fullName evidence="1">Phosphoglycerate kinase</fullName>
        <ecNumber evidence="1">2.7.2.3</ecNumber>
    </recommendedName>
</protein>
<name>PGK_LISMH</name>
<proteinExistence type="inferred from homology"/>
<keyword id="KW-0067">ATP-binding</keyword>
<keyword id="KW-0963">Cytoplasm</keyword>
<keyword id="KW-0324">Glycolysis</keyword>
<keyword id="KW-0418">Kinase</keyword>
<keyword id="KW-0547">Nucleotide-binding</keyword>
<keyword id="KW-0808">Transferase</keyword>
<reference key="1">
    <citation type="journal article" date="2011" name="J. Bacteriol.">
        <title>Genome sequence of lineage III Listeria monocytogenes strain HCC23.</title>
        <authorList>
            <person name="Steele C.L."/>
            <person name="Donaldson J.R."/>
            <person name="Paul D."/>
            <person name="Banes M.M."/>
            <person name="Arick T."/>
            <person name="Bridges S.M."/>
            <person name="Lawrence M.L."/>
        </authorList>
    </citation>
    <scope>NUCLEOTIDE SEQUENCE [LARGE SCALE GENOMIC DNA]</scope>
    <source>
        <strain>HCC23</strain>
    </source>
</reference>